<reference key="1">
    <citation type="submission" date="2005-09" db="EMBL/GenBank/DDBJ databases">
        <title>Complete genome sequence of Clostridium kluyveri and comparative genomics of Clostridia species.</title>
        <authorList>
            <person name="Inui M."/>
            <person name="Nonaka H."/>
            <person name="Shinoda Y."/>
            <person name="Ikenaga Y."/>
            <person name="Abe M."/>
            <person name="Naito K."/>
            <person name="Vertes A.A."/>
            <person name="Yukawa H."/>
        </authorList>
    </citation>
    <scope>NUCLEOTIDE SEQUENCE [LARGE SCALE GENOMIC DNA]</scope>
    <source>
        <strain>NBRC 12016</strain>
    </source>
</reference>
<name>PYRB_CLOK1</name>
<accession>B9E695</accession>
<protein>
    <recommendedName>
        <fullName evidence="1">Aspartate carbamoyltransferase catalytic subunit</fullName>
        <ecNumber evidence="1">2.1.3.2</ecNumber>
    </recommendedName>
    <alternativeName>
        <fullName evidence="1">Aspartate transcarbamylase</fullName>
        <shortName evidence="1">ATCase</shortName>
    </alternativeName>
</protein>
<comment type="function">
    <text evidence="1">Catalyzes the condensation of carbamoyl phosphate and aspartate to form carbamoyl aspartate and inorganic phosphate, the committed step in the de novo pyrimidine nucleotide biosynthesis pathway.</text>
</comment>
<comment type="catalytic activity">
    <reaction evidence="1">
        <text>carbamoyl phosphate + L-aspartate = N-carbamoyl-L-aspartate + phosphate + H(+)</text>
        <dbReference type="Rhea" id="RHEA:20013"/>
        <dbReference type="ChEBI" id="CHEBI:15378"/>
        <dbReference type="ChEBI" id="CHEBI:29991"/>
        <dbReference type="ChEBI" id="CHEBI:32814"/>
        <dbReference type="ChEBI" id="CHEBI:43474"/>
        <dbReference type="ChEBI" id="CHEBI:58228"/>
        <dbReference type="EC" id="2.1.3.2"/>
    </reaction>
</comment>
<comment type="pathway">
    <text evidence="1">Pyrimidine metabolism; UMP biosynthesis via de novo pathway; (S)-dihydroorotate from bicarbonate: step 2/3.</text>
</comment>
<comment type="subunit">
    <text evidence="1">Heterododecamer (2C3:3R2) of six catalytic PyrB chains organized as two trimers (C3), and six regulatory PyrI chains organized as three dimers (R2).</text>
</comment>
<comment type="similarity">
    <text evidence="1">Belongs to the aspartate/ornithine carbamoyltransferase superfamily. ATCase family.</text>
</comment>
<organism>
    <name type="scientific">Clostridium kluyveri (strain NBRC 12016)</name>
    <dbReference type="NCBI Taxonomy" id="583346"/>
    <lineage>
        <taxon>Bacteria</taxon>
        <taxon>Bacillati</taxon>
        <taxon>Bacillota</taxon>
        <taxon>Clostridia</taxon>
        <taxon>Eubacteriales</taxon>
        <taxon>Clostridiaceae</taxon>
        <taxon>Clostridium</taxon>
    </lineage>
</organism>
<sequence>MLKGRHLIDAMDFSIEELEEIFKLSNEIISREKEFSHICEGKLLATLFYEPSTRTRLSFESAMLRLGGKVMGFSEPGSSSASKGESIADTIRVISCYADIAAMRHPKEGAPKIAAMYSNIPVINAGDGGHQHPTQTLTDLLTVKSIKGRLSNLKIGCCGDLKFGRTVHSLIKAMSRYENNSFTLISPEELKIPNYLKKELNSKNVKYEETKNLEDSIESLDILYMTRVQRERFFNEEDYIRLKDSYILDKGKISRAAKDMIVLHPLPRVNEISYEIDKDPRAYYFKQAKYGMYVRMALMIKLLGIQ</sequence>
<evidence type="ECO:0000255" key="1">
    <source>
        <dbReference type="HAMAP-Rule" id="MF_00001"/>
    </source>
</evidence>
<dbReference type="EC" id="2.1.3.2" evidence="1"/>
<dbReference type="EMBL" id="AP009049">
    <property type="protein sequence ID" value="BAH08020.1"/>
    <property type="molecule type" value="Genomic_DNA"/>
</dbReference>
<dbReference type="RefSeq" id="WP_012103694.1">
    <property type="nucleotide sequence ID" value="NC_011837.1"/>
</dbReference>
<dbReference type="SMR" id="B9E695"/>
<dbReference type="KEGG" id="ckr:CKR_2969"/>
<dbReference type="HOGENOM" id="CLU_043846_1_2_9"/>
<dbReference type="UniPathway" id="UPA00070">
    <property type="reaction ID" value="UER00116"/>
</dbReference>
<dbReference type="Proteomes" id="UP000007969">
    <property type="component" value="Chromosome"/>
</dbReference>
<dbReference type="GO" id="GO:0016597">
    <property type="term" value="F:amino acid binding"/>
    <property type="evidence" value="ECO:0007669"/>
    <property type="project" value="InterPro"/>
</dbReference>
<dbReference type="GO" id="GO:0004070">
    <property type="term" value="F:aspartate carbamoyltransferase activity"/>
    <property type="evidence" value="ECO:0007669"/>
    <property type="project" value="UniProtKB-UniRule"/>
</dbReference>
<dbReference type="GO" id="GO:0006207">
    <property type="term" value="P:'de novo' pyrimidine nucleobase biosynthetic process"/>
    <property type="evidence" value="ECO:0007669"/>
    <property type="project" value="InterPro"/>
</dbReference>
<dbReference type="GO" id="GO:0044205">
    <property type="term" value="P:'de novo' UMP biosynthetic process"/>
    <property type="evidence" value="ECO:0007669"/>
    <property type="project" value="UniProtKB-UniRule"/>
</dbReference>
<dbReference type="GO" id="GO:0006520">
    <property type="term" value="P:amino acid metabolic process"/>
    <property type="evidence" value="ECO:0007669"/>
    <property type="project" value="InterPro"/>
</dbReference>
<dbReference type="FunFam" id="3.40.50.1370:FF:000002">
    <property type="entry name" value="Aspartate carbamoyltransferase 2"/>
    <property type="match status" value="1"/>
</dbReference>
<dbReference type="Gene3D" id="3.40.50.1370">
    <property type="entry name" value="Aspartate/ornithine carbamoyltransferase"/>
    <property type="match status" value="2"/>
</dbReference>
<dbReference type="HAMAP" id="MF_00001">
    <property type="entry name" value="Asp_carb_tr"/>
    <property type="match status" value="1"/>
</dbReference>
<dbReference type="InterPro" id="IPR006132">
    <property type="entry name" value="Asp/Orn_carbamoyltranf_P-bd"/>
</dbReference>
<dbReference type="InterPro" id="IPR006130">
    <property type="entry name" value="Asp/Orn_carbamoylTrfase"/>
</dbReference>
<dbReference type="InterPro" id="IPR036901">
    <property type="entry name" value="Asp/Orn_carbamoylTrfase_sf"/>
</dbReference>
<dbReference type="InterPro" id="IPR002082">
    <property type="entry name" value="Asp_carbamoyltransf"/>
</dbReference>
<dbReference type="InterPro" id="IPR006131">
    <property type="entry name" value="Asp_carbamoyltransf_Asp/Orn-bd"/>
</dbReference>
<dbReference type="NCBIfam" id="TIGR00670">
    <property type="entry name" value="asp_carb_tr"/>
    <property type="match status" value="1"/>
</dbReference>
<dbReference type="NCBIfam" id="NF002032">
    <property type="entry name" value="PRK00856.1"/>
    <property type="match status" value="1"/>
</dbReference>
<dbReference type="PANTHER" id="PTHR45753:SF6">
    <property type="entry name" value="ASPARTATE CARBAMOYLTRANSFERASE"/>
    <property type="match status" value="1"/>
</dbReference>
<dbReference type="PANTHER" id="PTHR45753">
    <property type="entry name" value="ORNITHINE CARBAMOYLTRANSFERASE, MITOCHONDRIAL"/>
    <property type="match status" value="1"/>
</dbReference>
<dbReference type="Pfam" id="PF00185">
    <property type="entry name" value="OTCace"/>
    <property type="match status" value="1"/>
</dbReference>
<dbReference type="Pfam" id="PF02729">
    <property type="entry name" value="OTCace_N"/>
    <property type="match status" value="1"/>
</dbReference>
<dbReference type="PRINTS" id="PR00100">
    <property type="entry name" value="AOTCASE"/>
</dbReference>
<dbReference type="PRINTS" id="PR00101">
    <property type="entry name" value="ATCASE"/>
</dbReference>
<dbReference type="SUPFAM" id="SSF53671">
    <property type="entry name" value="Aspartate/ornithine carbamoyltransferase"/>
    <property type="match status" value="1"/>
</dbReference>
<dbReference type="PROSITE" id="PS00097">
    <property type="entry name" value="CARBAMOYLTRANSFERASE"/>
    <property type="match status" value="1"/>
</dbReference>
<feature type="chain" id="PRO_1000116135" description="Aspartate carbamoyltransferase catalytic subunit">
    <location>
        <begin position="1"/>
        <end position="306"/>
    </location>
</feature>
<feature type="binding site" evidence="1">
    <location>
        <position position="54"/>
    </location>
    <ligand>
        <name>carbamoyl phosphate</name>
        <dbReference type="ChEBI" id="CHEBI:58228"/>
    </ligand>
</feature>
<feature type="binding site" evidence="1">
    <location>
        <position position="55"/>
    </location>
    <ligand>
        <name>carbamoyl phosphate</name>
        <dbReference type="ChEBI" id="CHEBI:58228"/>
    </ligand>
</feature>
<feature type="binding site" evidence="1">
    <location>
        <position position="83"/>
    </location>
    <ligand>
        <name>L-aspartate</name>
        <dbReference type="ChEBI" id="CHEBI:29991"/>
    </ligand>
</feature>
<feature type="binding site" evidence="1">
    <location>
        <position position="104"/>
    </location>
    <ligand>
        <name>carbamoyl phosphate</name>
        <dbReference type="ChEBI" id="CHEBI:58228"/>
    </ligand>
</feature>
<feature type="binding site" evidence="1">
    <location>
        <position position="132"/>
    </location>
    <ligand>
        <name>carbamoyl phosphate</name>
        <dbReference type="ChEBI" id="CHEBI:58228"/>
    </ligand>
</feature>
<feature type="binding site" evidence="1">
    <location>
        <position position="135"/>
    </location>
    <ligand>
        <name>carbamoyl phosphate</name>
        <dbReference type="ChEBI" id="CHEBI:58228"/>
    </ligand>
</feature>
<feature type="binding site" evidence="1">
    <location>
        <position position="165"/>
    </location>
    <ligand>
        <name>L-aspartate</name>
        <dbReference type="ChEBI" id="CHEBI:29991"/>
    </ligand>
</feature>
<feature type="binding site" evidence="1">
    <location>
        <position position="227"/>
    </location>
    <ligand>
        <name>L-aspartate</name>
        <dbReference type="ChEBI" id="CHEBI:29991"/>
    </ligand>
</feature>
<feature type="binding site" evidence="1">
    <location>
        <position position="266"/>
    </location>
    <ligand>
        <name>carbamoyl phosphate</name>
        <dbReference type="ChEBI" id="CHEBI:58228"/>
    </ligand>
</feature>
<feature type="binding site" evidence="1">
    <location>
        <position position="267"/>
    </location>
    <ligand>
        <name>carbamoyl phosphate</name>
        <dbReference type="ChEBI" id="CHEBI:58228"/>
    </ligand>
</feature>
<keyword id="KW-0665">Pyrimidine biosynthesis</keyword>
<keyword id="KW-0808">Transferase</keyword>
<proteinExistence type="inferred from homology"/>
<gene>
    <name evidence="1" type="primary">pyrB</name>
    <name type="ordered locus">CKR_2969</name>
</gene>